<dbReference type="EMBL" id="AL391716">
    <property type="protein sequence ID" value="CAC05498.1"/>
    <property type="molecule type" value="Genomic_DNA"/>
</dbReference>
<dbReference type="EMBL" id="CP002688">
    <property type="protein sequence ID" value="AED90706.1"/>
    <property type="molecule type" value="Genomic_DNA"/>
</dbReference>
<dbReference type="EMBL" id="AY062475">
    <property type="protein sequence ID" value="AAL32553.1"/>
    <property type="molecule type" value="mRNA"/>
</dbReference>
<dbReference type="EMBL" id="AY093253">
    <property type="protein sequence ID" value="AAM13252.1"/>
    <property type="molecule type" value="mRNA"/>
</dbReference>
<dbReference type="EMBL" id="AY084240">
    <property type="protein sequence ID" value="AAM60836.1"/>
    <property type="molecule type" value="mRNA"/>
</dbReference>
<dbReference type="RefSeq" id="NP_196036.1">
    <property type="nucleotide sequence ID" value="NM_120498.3"/>
</dbReference>
<dbReference type="SMR" id="Q9FYE5"/>
<dbReference type="BioGRID" id="15574">
    <property type="interactions" value="4"/>
</dbReference>
<dbReference type="FunCoup" id="Q9FYE5">
    <property type="interactions" value="274"/>
</dbReference>
<dbReference type="IntAct" id="Q9FYE5">
    <property type="interactions" value="4"/>
</dbReference>
<dbReference type="STRING" id="3702.Q9FYE5"/>
<dbReference type="PaxDb" id="3702-AT5G04160.1"/>
<dbReference type="ProteomicsDB" id="228667"/>
<dbReference type="EnsemblPlants" id="AT5G04160.1">
    <property type="protein sequence ID" value="AT5G04160.1"/>
    <property type="gene ID" value="AT5G04160"/>
</dbReference>
<dbReference type="GeneID" id="830294"/>
<dbReference type="Gramene" id="AT5G04160.1">
    <property type="protein sequence ID" value="AT5G04160.1"/>
    <property type="gene ID" value="AT5G04160"/>
</dbReference>
<dbReference type="KEGG" id="ath:AT5G04160"/>
<dbReference type="Araport" id="AT5G04160"/>
<dbReference type="TAIR" id="AT5G04160">
    <property type="gene designation" value="UUAT1"/>
</dbReference>
<dbReference type="eggNOG" id="KOG1441">
    <property type="taxonomic scope" value="Eukaryota"/>
</dbReference>
<dbReference type="HOGENOM" id="CLU_022332_2_1_1"/>
<dbReference type="InParanoid" id="Q9FYE5"/>
<dbReference type="OMA" id="TLITFWY"/>
<dbReference type="PhylomeDB" id="Q9FYE5"/>
<dbReference type="PRO" id="PR:Q9FYE5"/>
<dbReference type="Proteomes" id="UP000006548">
    <property type="component" value="Chromosome 5"/>
</dbReference>
<dbReference type="ExpressionAtlas" id="Q9FYE5">
    <property type="expression patterns" value="baseline and differential"/>
</dbReference>
<dbReference type="GO" id="GO:0005794">
    <property type="term" value="C:Golgi apparatus"/>
    <property type="evidence" value="ECO:0000314"/>
    <property type="project" value="TAIR"/>
</dbReference>
<dbReference type="GO" id="GO:0000139">
    <property type="term" value="C:Golgi membrane"/>
    <property type="evidence" value="ECO:0007669"/>
    <property type="project" value="UniProtKB-SubCell"/>
</dbReference>
<dbReference type="GO" id="GO:0048359">
    <property type="term" value="P:mucilage metabolic process involved in seed coat development"/>
    <property type="evidence" value="ECO:0000315"/>
    <property type="project" value="TAIR"/>
</dbReference>
<dbReference type="GO" id="GO:0015780">
    <property type="term" value="P:nucleotide-sugar transmembrane transport"/>
    <property type="evidence" value="ECO:0000315"/>
    <property type="project" value="TAIR"/>
</dbReference>
<dbReference type="InterPro" id="IPR004853">
    <property type="entry name" value="Sugar_P_trans_dom"/>
</dbReference>
<dbReference type="InterPro" id="IPR050186">
    <property type="entry name" value="TPT_transporter"/>
</dbReference>
<dbReference type="PANTHER" id="PTHR11132">
    <property type="entry name" value="SOLUTE CARRIER FAMILY 35"/>
    <property type="match status" value="1"/>
</dbReference>
<dbReference type="Pfam" id="PF03151">
    <property type="entry name" value="TPT"/>
    <property type="match status" value="1"/>
</dbReference>
<dbReference type="SUPFAM" id="SSF103481">
    <property type="entry name" value="Multidrug resistance efflux transporter EmrE"/>
    <property type="match status" value="2"/>
</dbReference>
<protein>
    <recommendedName>
        <fullName evidence="3">UDP-URONIC ACID TRANSPORTER 1</fullName>
    </recommendedName>
</protein>
<evidence type="ECO:0000255" key="1"/>
<evidence type="ECO:0000269" key="2">
    <source>
    </source>
</evidence>
<evidence type="ECO:0000303" key="3">
    <source>
    </source>
</evidence>
<evidence type="ECO:0000305" key="4"/>
<evidence type="ECO:0000312" key="5">
    <source>
        <dbReference type="Araport" id="AT5G04160"/>
    </source>
</evidence>
<evidence type="ECO:0000312" key="6">
    <source>
        <dbReference type="EMBL" id="CAC05498.1"/>
    </source>
</evidence>
<accession>Q9FYE5</accession>
<accession>Q8W4M4</accession>
<gene>
    <name evidence="3" type="primary">UUAT1</name>
    <name evidence="5" type="ordered locus">At5g04160</name>
    <name evidence="6" type="ORF">F21E1.80</name>
</gene>
<sequence>MSSSAKKQTLFISTLIISWYSSNIGVLLLNKFLLSNYGFKFPIFLTMCHMSACAILSYISIVFLKLVPLQHLKSRSQFLKVATLSIVFCASVVGGNISLRYLPVSFNQAVGATTPFFTALFAYLMTFKREAWVTYGALVPVVAGVVIASGGEPGFHWFGFIMCISATAARAFKSVLQGILLSSEGEKLNSMNLMLYMSPIAVIALLPVTLFMEPDVISVTLTLAKQHQYMWILLLVNSVMAYSANLLNFLVTKHTSALTLQVLGNAKGAVAVVISILIFQNPVTVMGIGGYSITVLGVVAYGETKRRFR</sequence>
<keyword id="KW-0333">Golgi apparatus</keyword>
<keyword id="KW-0472">Membrane</keyword>
<keyword id="KW-0670">Pyruvate</keyword>
<keyword id="KW-1185">Reference proteome</keyword>
<keyword id="KW-0762">Sugar transport</keyword>
<keyword id="KW-0812">Transmembrane</keyword>
<keyword id="KW-1133">Transmembrane helix</keyword>
<keyword id="KW-0813">Transport</keyword>
<organism>
    <name type="scientific">Arabidopsis thaliana</name>
    <name type="common">Mouse-ear cress</name>
    <dbReference type="NCBI Taxonomy" id="3702"/>
    <lineage>
        <taxon>Eukaryota</taxon>
        <taxon>Viridiplantae</taxon>
        <taxon>Streptophyta</taxon>
        <taxon>Embryophyta</taxon>
        <taxon>Tracheophyta</taxon>
        <taxon>Spermatophyta</taxon>
        <taxon>Magnoliopsida</taxon>
        <taxon>eudicotyledons</taxon>
        <taxon>Gunneridae</taxon>
        <taxon>Pentapetalae</taxon>
        <taxon>rosids</taxon>
        <taxon>malvids</taxon>
        <taxon>Brassicales</taxon>
        <taxon>Brassicaceae</taxon>
        <taxon>Camelineae</taxon>
        <taxon>Arabidopsis</taxon>
    </lineage>
</organism>
<feature type="chain" id="PRO_0000406115" description="UDP-URONIC ACID TRANSPORTER 1">
    <location>
        <begin position="1"/>
        <end position="309"/>
    </location>
</feature>
<feature type="transmembrane region" description="Helical" evidence="1">
    <location>
        <begin position="9"/>
        <end position="29"/>
    </location>
</feature>
<feature type="transmembrane region" description="Helical" evidence="1">
    <location>
        <begin position="43"/>
        <end position="63"/>
    </location>
</feature>
<feature type="transmembrane region" description="Helical" evidence="1">
    <location>
        <begin position="78"/>
        <end position="98"/>
    </location>
</feature>
<feature type="transmembrane region" description="Helical" evidence="1">
    <location>
        <begin position="104"/>
        <end position="124"/>
    </location>
</feature>
<feature type="transmembrane region" description="Helical" evidence="1">
    <location>
        <begin position="131"/>
        <end position="151"/>
    </location>
</feature>
<feature type="transmembrane region" description="Helical" evidence="1">
    <location>
        <begin position="152"/>
        <end position="172"/>
    </location>
</feature>
<feature type="transmembrane region" description="Helical" evidence="1">
    <location>
        <begin position="193"/>
        <end position="213"/>
    </location>
</feature>
<feature type="transmembrane region" description="Helical" evidence="1">
    <location>
        <begin position="231"/>
        <end position="251"/>
    </location>
</feature>
<feature type="transmembrane region" description="Helical" evidence="1">
    <location>
        <begin position="256"/>
        <end position="278"/>
    </location>
</feature>
<feature type="transmembrane region" description="Helical" evidence="1">
    <location>
        <begin position="283"/>
        <end position="302"/>
    </location>
</feature>
<feature type="sequence conflict" description="In Ref. 3; AAL32553/AAM13252." evidence="4" ref="3">
    <original>I</original>
    <variation>V</variation>
    <location>
        <position position="200"/>
    </location>
</feature>
<proteinExistence type="evidence at protein level"/>
<comment type="function">
    <text evidence="2">UDP-glucuronic acid transporter that modulates the polysaccharide composition of seed mucilage. Transports UDP-glucuronic acid (UDP-GlcA) and UDP-galacturonic acid (UDP-GalA) in vitro.</text>
</comment>
<comment type="biophysicochemical properties">
    <kinetics>
        <KM evidence="2">1.5 mM for UDP-GlcA</KM>
    </kinetics>
</comment>
<comment type="subcellular location">
    <subcellularLocation>
        <location evidence="2">Golgi apparatus membrane</location>
        <topology evidence="1">Multi-pass membrane protein</topology>
    </subcellularLocation>
</comment>
<comment type="tissue specificity">
    <text evidence="2">Ubiquitous.</text>
</comment>
<comment type="developmental stage">
    <text evidence="2">Expressed during seed development at the mucilage production stages.</text>
</comment>
<comment type="disruption phenotype">
    <text evidence="2">Changes in cell wall monosaccharide composition with a strong reduction of galacturonic acid (GalA), rhamnose and xylose content in the sead coat mucilage composition.</text>
</comment>
<comment type="similarity">
    <text evidence="4">Belongs to the TPT transporter family. TPT (TC 2.A.7.9) subfamily.</text>
</comment>
<reference key="1">
    <citation type="journal article" date="2000" name="Nature">
        <title>Sequence and analysis of chromosome 5 of the plant Arabidopsis thaliana.</title>
        <authorList>
            <person name="Tabata S."/>
            <person name="Kaneko T."/>
            <person name="Nakamura Y."/>
            <person name="Kotani H."/>
            <person name="Kato T."/>
            <person name="Asamizu E."/>
            <person name="Miyajima N."/>
            <person name="Sasamoto S."/>
            <person name="Kimura T."/>
            <person name="Hosouchi T."/>
            <person name="Kawashima K."/>
            <person name="Kohara M."/>
            <person name="Matsumoto M."/>
            <person name="Matsuno A."/>
            <person name="Muraki A."/>
            <person name="Nakayama S."/>
            <person name="Nakazaki N."/>
            <person name="Naruo K."/>
            <person name="Okumura S."/>
            <person name="Shinpo S."/>
            <person name="Takeuchi C."/>
            <person name="Wada T."/>
            <person name="Watanabe A."/>
            <person name="Yamada M."/>
            <person name="Yasuda M."/>
            <person name="Sato S."/>
            <person name="de la Bastide M."/>
            <person name="Huang E."/>
            <person name="Spiegel L."/>
            <person name="Gnoj L."/>
            <person name="O'Shaughnessy A."/>
            <person name="Preston R."/>
            <person name="Habermann K."/>
            <person name="Murray J."/>
            <person name="Johnson D."/>
            <person name="Rohlfing T."/>
            <person name="Nelson J."/>
            <person name="Stoneking T."/>
            <person name="Pepin K."/>
            <person name="Spieth J."/>
            <person name="Sekhon M."/>
            <person name="Armstrong J."/>
            <person name="Becker M."/>
            <person name="Belter E."/>
            <person name="Cordum H."/>
            <person name="Cordes M."/>
            <person name="Courtney L."/>
            <person name="Courtney W."/>
            <person name="Dante M."/>
            <person name="Du H."/>
            <person name="Edwards J."/>
            <person name="Fryman J."/>
            <person name="Haakensen B."/>
            <person name="Lamar E."/>
            <person name="Latreille P."/>
            <person name="Leonard S."/>
            <person name="Meyer R."/>
            <person name="Mulvaney E."/>
            <person name="Ozersky P."/>
            <person name="Riley A."/>
            <person name="Strowmatt C."/>
            <person name="Wagner-McPherson C."/>
            <person name="Wollam A."/>
            <person name="Yoakum M."/>
            <person name="Bell M."/>
            <person name="Dedhia N."/>
            <person name="Parnell L."/>
            <person name="Shah R."/>
            <person name="Rodriguez M."/>
            <person name="Hoon See L."/>
            <person name="Vil D."/>
            <person name="Baker J."/>
            <person name="Kirchoff K."/>
            <person name="Toth K."/>
            <person name="King L."/>
            <person name="Bahret A."/>
            <person name="Miller B."/>
            <person name="Marra M.A."/>
            <person name="Martienssen R."/>
            <person name="McCombie W.R."/>
            <person name="Wilson R.K."/>
            <person name="Murphy G."/>
            <person name="Bancroft I."/>
            <person name="Volckaert G."/>
            <person name="Wambutt R."/>
            <person name="Duesterhoeft A."/>
            <person name="Stiekema W."/>
            <person name="Pohl T."/>
            <person name="Entian K.-D."/>
            <person name="Terryn N."/>
            <person name="Hartley N."/>
            <person name="Bent E."/>
            <person name="Johnson S."/>
            <person name="Langham S.-A."/>
            <person name="McCullagh B."/>
            <person name="Robben J."/>
            <person name="Grymonprez B."/>
            <person name="Zimmermann W."/>
            <person name="Ramsperger U."/>
            <person name="Wedler H."/>
            <person name="Balke K."/>
            <person name="Wedler E."/>
            <person name="Peters S."/>
            <person name="van Staveren M."/>
            <person name="Dirkse W."/>
            <person name="Mooijman P."/>
            <person name="Klein Lankhorst R."/>
            <person name="Weitzenegger T."/>
            <person name="Bothe G."/>
            <person name="Rose M."/>
            <person name="Hauf J."/>
            <person name="Berneiser S."/>
            <person name="Hempel S."/>
            <person name="Feldpausch M."/>
            <person name="Lamberth S."/>
            <person name="Villarroel R."/>
            <person name="Gielen J."/>
            <person name="Ardiles W."/>
            <person name="Bents O."/>
            <person name="Lemcke K."/>
            <person name="Kolesov G."/>
            <person name="Mayer K.F.X."/>
            <person name="Rudd S."/>
            <person name="Schoof H."/>
            <person name="Schueller C."/>
            <person name="Zaccaria P."/>
            <person name="Mewes H.-W."/>
            <person name="Bevan M."/>
            <person name="Fransz P.F."/>
        </authorList>
    </citation>
    <scope>NUCLEOTIDE SEQUENCE [LARGE SCALE GENOMIC DNA]</scope>
    <source>
        <strain>cv. Columbia</strain>
    </source>
</reference>
<reference key="2">
    <citation type="journal article" date="2017" name="Plant J.">
        <title>Araport11: a complete reannotation of the Arabidopsis thaliana reference genome.</title>
        <authorList>
            <person name="Cheng C.Y."/>
            <person name="Krishnakumar V."/>
            <person name="Chan A.P."/>
            <person name="Thibaud-Nissen F."/>
            <person name="Schobel S."/>
            <person name="Town C.D."/>
        </authorList>
    </citation>
    <scope>GENOME REANNOTATION</scope>
    <source>
        <strain>cv. Columbia</strain>
    </source>
</reference>
<reference key="3">
    <citation type="journal article" date="2003" name="Science">
        <title>Empirical analysis of transcriptional activity in the Arabidopsis genome.</title>
        <authorList>
            <person name="Yamada K."/>
            <person name="Lim J."/>
            <person name="Dale J.M."/>
            <person name="Chen H."/>
            <person name="Shinn P."/>
            <person name="Palm C.J."/>
            <person name="Southwick A.M."/>
            <person name="Wu H.C."/>
            <person name="Kim C.J."/>
            <person name="Nguyen M."/>
            <person name="Pham P.K."/>
            <person name="Cheuk R.F."/>
            <person name="Karlin-Newmann G."/>
            <person name="Liu S.X."/>
            <person name="Lam B."/>
            <person name="Sakano H."/>
            <person name="Wu T."/>
            <person name="Yu G."/>
            <person name="Miranda M."/>
            <person name="Quach H.L."/>
            <person name="Tripp M."/>
            <person name="Chang C.H."/>
            <person name="Lee J.M."/>
            <person name="Toriumi M.J."/>
            <person name="Chan M.M."/>
            <person name="Tang C.C."/>
            <person name="Onodera C.S."/>
            <person name="Deng J.M."/>
            <person name="Akiyama K."/>
            <person name="Ansari Y."/>
            <person name="Arakawa T."/>
            <person name="Banh J."/>
            <person name="Banno F."/>
            <person name="Bowser L."/>
            <person name="Brooks S.Y."/>
            <person name="Carninci P."/>
            <person name="Chao Q."/>
            <person name="Choy N."/>
            <person name="Enju A."/>
            <person name="Goldsmith A.D."/>
            <person name="Gurjal M."/>
            <person name="Hansen N.F."/>
            <person name="Hayashizaki Y."/>
            <person name="Johnson-Hopson C."/>
            <person name="Hsuan V.W."/>
            <person name="Iida K."/>
            <person name="Karnes M."/>
            <person name="Khan S."/>
            <person name="Koesema E."/>
            <person name="Ishida J."/>
            <person name="Jiang P.X."/>
            <person name="Jones T."/>
            <person name="Kawai J."/>
            <person name="Kamiya A."/>
            <person name="Meyers C."/>
            <person name="Nakajima M."/>
            <person name="Narusaka M."/>
            <person name="Seki M."/>
            <person name="Sakurai T."/>
            <person name="Satou M."/>
            <person name="Tamse R."/>
            <person name="Vaysberg M."/>
            <person name="Wallender E.K."/>
            <person name="Wong C."/>
            <person name="Yamamura Y."/>
            <person name="Yuan S."/>
            <person name="Shinozaki K."/>
            <person name="Davis R.W."/>
            <person name="Theologis A."/>
            <person name="Ecker J.R."/>
        </authorList>
    </citation>
    <scope>NUCLEOTIDE SEQUENCE [LARGE SCALE MRNA]</scope>
    <source>
        <strain>cv. Columbia</strain>
    </source>
</reference>
<reference key="4">
    <citation type="submission" date="2002-03" db="EMBL/GenBank/DDBJ databases">
        <title>Full-length cDNA from Arabidopsis thaliana.</title>
        <authorList>
            <person name="Brover V.V."/>
            <person name="Troukhan M.E."/>
            <person name="Alexandrov N.A."/>
            <person name="Lu Y.-P."/>
            <person name="Flavell R.B."/>
            <person name="Feldmann K.A."/>
        </authorList>
    </citation>
    <scope>NUCLEOTIDE SEQUENCE [LARGE SCALE MRNA]</scope>
</reference>
<reference key="5">
    <citation type="journal article" date="2014" name="Proc. Natl. Acad. Sci. U.S.A.">
        <title>The Golgi localized bifunctional UDP-rhamnose/UDP-galactose transporter family of Arabidopsis.</title>
        <authorList>
            <person name="Rautengarten C."/>
            <person name="Ebert B."/>
            <person name="Moreno I."/>
            <person name="Temple H."/>
            <person name="Herter T."/>
            <person name="Link B."/>
            <person name="Donas-Cofre D."/>
            <person name="Moreno A."/>
            <person name="Saez-Aguayo S."/>
            <person name="Blanco F."/>
            <person name="Mortimer J.C."/>
            <person name="Schultink A."/>
            <person name="Reiter W.D."/>
            <person name="Dupree P."/>
            <person name="Pauly M."/>
            <person name="Heazlewood J.L."/>
            <person name="Scheller H.V."/>
            <person name="Orellana A."/>
        </authorList>
    </citation>
    <scope>GENE FAMILY</scope>
</reference>
<reference key="6">
    <citation type="journal article" date="2017" name="Plant Cell">
        <title>UUAT1 is a Golgi-localized UDP-uronic acid transporter that modulates the polysaccharide composition of Arabidopsis seed mucilage.</title>
        <authorList>
            <person name="Saez-Aguayo S."/>
            <person name="Rautengarten C."/>
            <person name="Temple H."/>
            <person name="Sanhueza D."/>
            <person name="Ejsmentewicz T."/>
            <person name="Sandoval-Ibanez O."/>
            <person name="Donas D."/>
            <person name="Parra-Rojas J.P."/>
            <person name="Ebert B."/>
            <person name="Lehner A."/>
            <person name="Mollet J.C."/>
            <person name="Dupree P."/>
            <person name="Scheller H.V."/>
            <person name="Heazlewood J.L."/>
            <person name="Reyes F.C."/>
            <person name="Orellana A."/>
        </authorList>
    </citation>
    <scope>FUNCTION</scope>
    <scope>DISRUPTION PHENOTYPE</scope>
    <scope>DEVELOPMENTAL STAGE</scope>
    <scope>BIOPHYSICOCHEMICAL PROPERTIES</scope>
    <scope>SUBCELLULAR LOCATION</scope>
    <scope>TISSUE SPECIFICITY</scope>
</reference>
<name>UUAT1_ARATH</name>